<sequence length="231" mass="24218">MAKLTKRQKQIRERVDGNHAYPVDEALALVKELATARFPESIDVAVNLGVDPRKSDQIVRGSTVLPNGTGKSMRVAVFAQGENADAAQAEGADAVGMDDLAERMQGGELDYDVVIASPDAMGVVGKLGPVLGPRGLMPNPKTGTVSADVAGAVRNAKAGQVRYRTDRGGVIHSAIGRANFDEQALRENLDALLADLNKLKPSTSKGVYIKGITVSSTMGAGVRVDRATLGV</sequence>
<organism>
    <name type="scientific">Halorhodospira halophila (strain DSM 244 / SL1)</name>
    <name type="common">Ectothiorhodospira halophila (strain DSM 244 / SL1)</name>
    <dbReference type="NCBI Taxonomy" id="349124"/>
    <lineage>
        <taxon>Bacteria</taxon>
        <taxon>Pseudomonadati</taxon>
        <taxon>Pseudomonadota</taxon>
        <taxon>Gammaproteobacteria</taxon>
        <taxon>Chromatiales</taxon>
        <taxon>Ectothiorhodospiraceae</taxon>
        <taxon>Halorhodospira</taxon>
    </lineage>
</organism>
<reference key="1">
    <citation type="submission" date="2006-12" db="EMBL/GenBank/DDBJ databases">
        <title>Complete sequence of Halorhodospira halophila SL1.</title>
        <authorList>
            <consortium name="US DOE Joint Genome Institute"/>
            <person name="Copeland A."/>
            <person name="Lucas S."/>
            <person name="Lapidus A."/>
            <person name="Barry K."/>
            <person name="Detter J.C."/>
            <person name="Glavina del Rio T."/>
            <person name="Hammon N."/>
            <person name="Israni S."/>
            <person name="Dalin E."/>
            <person name="Tice H."/>
            <person name="Pitluck S."/>
            <person name="Saunders E."/>
            <person name="Brettin T."/>
            <person name="Bruce D."/>
            <person name="Han C."/>
            <person name="Tapia R."/>
            <person name="Schmutz J."/>
            <person name="Larimer F."/>
            <person name="Land M."/>
            <person name="Hauser L."/>
            <person name="Kyrpides N."/>
            <person name="Mikhailova N."/>
            <person name="Hoff W."/>
            <person name="Richardson P."/>
        </authorList>
    </citation>
    <scope>NUCLEOTIDE SEQUENCE [LARGE SCALE GENOMIC DNA]</scope>
    <source>
        <strain>DSM 244 / SL1</strain>
    </source>
</reference>
<protein>
    <recommendedName>
        <fullName evidence="1">Large ribosomal subunit protein uL1</fullName>
    </recommendedName>
    <alternativeName>
        <fullName evidence="2">50S ribosomal protein L1</fullName>
    </alternativeName>
</protein>
<evidence type="ECO:0000255" key="1">
    <source>
        <dbReference type="HAMAP-Rule" id="MF_01318"/>
    </source>
</evidence>
<evidence type="ECO:0000305" key="2"/>
<gene>
    <name evidence="1" type="primary">rplA</name>
    <name type="ordered locus">Hhal_0868</name>
</gene>
<feature type="chain" id="PRO_0000308020" description="Large ribosomal subunit protein uL1">
    <location>
        <begin position="1"/>
        <end position="231"/>
    </location>
</feature>
<accession>A1WVD2</accession>
<comment type="function">
    <text evidence="1">Binds directly to 23S rRNA. The L1 stalk is quite mobile in the ribosome, and is involved in E site tRNA release.</text>
</comment>
<comment type="function">
    <text evidence="1">Protein L1 is also a translational repressor protein, it controls the translation of the L11 operon by binding to its mRNA.</text>
</comment>
<comment type="subunit">
    <text evidence="1">Part of the 50S ribosomal subunit.</text>
</comment>
<comment type="similarity">
    <text evidence="1">Belongs to the universal ribosomal protein uL1 family.</text>
</comment>
<proteinExistence type="inferred from homology"/>
<name>RL1_HALHL</name>
<dbReference type="EMBL" id="CP000544">
    <property type="protein sequence ID" value="ABM61644.1"/>
    <property type="molecule type" value="Genomic_DNA"/>
</dbReference>
<dbReference type="RefSeq" id="WP_011813667.1">
    <property type="nucleotide sequence ID" value="NC_008789.1"/>
</dbReference>
<dbReference type="SMR" id="A1WVD2"/>
<dbReference type="STRING" id="349124.Hhal_0868"/>
<dbReference type="KEGG" id="hha:Hhal_0868"/>
<dbReference type="eggNOG" id="COG0081">
    <property type="taxonomic scope" value="Bacteria"/>
</dbReference>
<dbReference type="HOGENOM" id="CLU_062853_0_0_6"/>
<dbReference type="OrthoDB" id="9803740at2"/>
<dbReference type="Proteomes" id="UP000000647">
    <property type="component" value="Chromosome"/>
</dbReference>
<dbReference type="GO" id="GO:0022625">
    <property type="term" value="C:cytosolic large ribosomal subunit"/>
    <property type="evidence" value="ECO:0007669"/>
    <property type="project" value="TreeGrafter"/>
</dbReference>
<dbReference type="GO" id="GO:0019843">
    <property type="term" value="F:rRNA binding"/>
    <property type="evidence" value="ECO:0007669"/>
    <property type="project" value="UniProtKB-UniRule"/>
</dbReference>
<dbReference type="GO" id="GO:0003735">
    <property type="term" value="F:structural constituent of ribosome"/>
    <property type="evidence" value="ECO:0007669"/>
    <property type="project" value="InterPro"/>
</dbReference>
<dbReference type="GO" id="GO:0000049">
    <property type="term" value="F:tRNA binding"/>
    <property type="evidence" value="ECO:0007669"/>
    <property type="project" value="UniProtKB-KW"/>
</dbReference>
<dbReference type="GO" id="GO:0006417">
    <property type="term" value="P:regulation of translation"/>
    <property type="evidence" value="ECO:0007669"/>
    <property type="project" value="UniProtKB-KW"/>
</dbReference>
<dbReference type="GO" id="GO:0006412">
    <property type="term" value="P:translation"/>
    <property type="evidence" value="ECO:0007669"/>
    <property type="project" value="UniProtKB-UniRule"/>
</dbReference>
<dbReference type="CDD" id="cd00403">
    <property type="entry name" value="Ribosomal_L1"/>
    <property type="match status" value="1"/>
</dbReference>
<dbReference type="FunFam" id="3.40.50.790:FF:000001">
    <property type="entry name" value="50S ribosomal protein L1"/>
    <property type="match status" value="1"/>
</dbReference>
<dbReference type="Gene3D" id="3.30.190.20">
    <property type="match status" value="1"/>
</dbReference>
<dbReference type="Gene3D" id="3.40.50.790">
    <property type="match status" value="1"/>
</dbReference>
<dbReference type="HAMAP" id="MF_01318_B">
    <property type="entry name" value="Ribosomal_uL1_B"/>
    <property type="match status" value="1"/>
</dbReference>
<dbReference type="InterPro" id="IPR005878">
    <property type="entry name" value="Ribosom_uL1_bac-type"/>
</dbReference>
<dbReference type="InterPro" id="IPR002143">
    <property type="entry name" value="Ribosomal_uL1"/>
</dbReference>
<dbReference type="InterPro" id="IPR023674">
    <property type="entry name" value="Ribosomal_uL1-like"/>
</dbReference>
<dbReference type="InterPro" id="IPR028364">
    <property type="entry name" value="Ribosomal_uL1/biogenesis"/>
</dbReference>
<dbReference type="InterPro" id="IPR016095">
    <property type="entry name" value="Ribosomal_uL1_3-a/b-sand"/>
</dbReference>
<dbReference type="InterPro" id="IPR023673">
    <property type="entry name" value="Ribosomal_uL1_CS"/>
</dbReference>
<dbReference type="NCBIfam" id="TIGR01169">
    <property type="entry name" value="rplA_bact"/>
    <property type="match status" value="1"/>
</dbReference>
<dbReference type="PANTHER" id="PTHR36427">
    <property type="entry name" value="54S RIBOSOMAL PROTEIN L1, MITOCHONDRIAL"/>
    <property type="match status" value="1"/>
</dbReference>
<dbReference type="PANTHER" id="PTHR36427:SF3">
    <property type="entry name" value="LARGE RIBOSOMAL SUBUNIT PROTEIN UL1M"/>
    <property type="match status" value="1"/>
</dbReference>
<dbReference type="Pfam" id="PF00687">
    <property type="entry name" value="Ribosomal_L1"/>
    <property type="match status" value="1"/>
</dbReference>
<dbReference type="PIRSF" id="PIRSF002155">
    <property type="entry name" value="Ribosomal_L1"/>
    <property type="match status" value="1"/>
</dbReference>
<dbReference type="SUPFAM" id="SSF56808">
    <property type="entry name" value="Ribosomal protein L1"/>
    <property type="match status" value="1"/>
</dbReference>
<dbReference type="PROSITE" id="PS01199">
    <property type="entry name" value="RIBOSOMAL_L1"/>
    <property type="match status" value="1"/>
</dbReference>
<keyword id="KW-1185">Reference proteome</keyword>
<keyword id="KW-0678">Repressor</keyword>
<keyword id="KW-0687">Ribonucleoprotein</keyword>
<keyword id="KW-0689">Ribosomal protein</keyword>
<keyword id="KW-0694">RNA-binding</keyword>
<keyword id="KW-0699">rRNA-binding</keyword>
<keyword id="KW-0810">Translation regulation</keyword>
<keyword id="KW-0820">tRNA-binding</keyword>